<evidence type="ECO:0000255" key="1"/>
<evidence type="ECO:0000269" key="2">
    <source>
    </source>
</evidence>
<evidence type="ECO:0000269" key="3">
    <source>
    </source>
</evidence>
<evidence type="ECO:0000269" key="4">
    <source>
    </source>
</evidence>
<evidence type="ECO:0000269" key="5">
    <source>
    </source>
</evidence>
<evidence type="ECO:0000269" key="6">
    <source>
    </source>
</evidence>
<evidence type="ECO:0000305" key="7"/>
<evidence type="ECO:0000312" key="8">
    <source>
        <dbReference type="WormBase" id="B0213.4"/>
    </source>
</evidence>
<feature type="signal peptide" evidence="1">
    <location>
        <begin position="1"/>
        <end position="22"/>
    </location>
</feature>
<feature type="peptide" id="PRO_0000041493" description="QWGYGGY-amide" evidence="1">
    <location>
        <begin position="23"/>
        <end position="29"/>
    </location>
</feature>
<feature type="peptide" id="PRO_0000041494" description="GYGGYGGY-amide" evidence="1">
    <location>
        <begin position="32"/>
        <end position="39"/>
    </location>
</feature>
<feature type="peptide" id="PRO_0000041495" description="GMYGGY-amide" evidence="1">
    <location>
        <begin position="42"/>
        <end position="47"/>
    </location>
</feature>
<feature type="peptide" id="PRO_0000041496" description="GMYGGY-amide" evidence="1">
    <location>
        <begin position="50"/>
        <end position="55"/>
    </location>
</feature>
<feature type="peptide" id="PRO_0000041497" description="GMYGGY-amide" evidence="1">
    <location>
        <begin position="58"/>
        <end position="63"/>
    </location>
</feature>
<feature type="peptide" id="PRO_0000041498" description="GMYGGW-amide" evidence="1">
    <location>
        <begin position="66"/>
        <end position="71"/>
    </location>
</feature>
<feature type="modified residue" description="Tyrosine amide" evidence="1">
    <location>
        <position position="29"/>
    </location>
</feature>
<feature type="modified residue" description="Tyrosine amide" evidence="1">
    <location>
        <position position="39"/>
    </location>
</feature>
<feature type="modified residue" description="Tyrosine amide" evidence="1">
    <location>
        <position position="47"/>
    </location>
</feature>
<feature type="modified residue" description="Tyrosine amide" evidence="1">
    <location>
        <position position="55"/>
    </location>
</feature>
<feature type="modified residue" description="Tyrosine amide" evidence="1">
    <location>
        <position position="63"/>
    </location>
</feature>
<feature type="modified residue" description="Tryptophan amide" evidence="1">
    <location>
        <position position="71"/>
    </location>
</feature>
<keyword id="KW-0027">Amidation</keyword>
<keyword id="KW-0044">Antibiotic</keyword>
<keyword id="KW-0929">Antimicrobial</keyword>
<keyword id="KW-0165">Cleavage on pair of basic residues</keyword>
<keyword id="KW-0295">Fungicide</keyword>
<keyword id="KW-0527">Neuropeptide</keyword>
<keyword id="KW-1185">Reference proteome</keyword>
<keyword id="KW-0677">Repeat</keyword>
<keyword id="KW-0964">Secreted</keyword>
<keyword id="KW-0732">Signal</keyword>
<name>NLP29_CAEEL</name>
<accession>O44664</accession>
<sequence length="73" mass="7617">MISTSSILVLVVLLACFMAASAQWGYGGYGRGYGGYGGYGRGMYGGYGRGMYGGYGRGMYGGYGRGMYGGWGK</sequence>
<proteinExistence type="evidence at transcript level"/>
<dbReference type="EMBL" id="BX284605">
    <property type="protein sequence ID" value="CCD61354.1"/>
    <property type="molecule type" value="Genomic_DNA"/>
</dbReference>
<dbReference type="PIR" id="C89016">
    <property type="entry name" value="C89016"/>
</dbReference>
<dbReference type="RefSeq" id="NP_504109.1">
    <property type="nucleotide sequence ID" value="NM_071708.6"/>
</dbReference>
<dbReference type="BioGRID" id="43859">
    <property type="interactions" value="1"/>
</dbReference>
<dbReference type="FunCoup" id="O44664">
    <property type="interactions" value="158"/>
</dbReference>
<dbReference type="STRING" id="6239.B0213.4.1"/>
<dbReference type="PaxDb" id="6239-B0213.4"/>
<dbReference type="EnsemblMetazoa" id="B0213.4.1">
    <property type="protein sequence ID" value="B0213.4.1"/>
    <property type="gene ID" value="WBGene00003767"/>
</dbReference>
<dbReference type="GeneID" id="178805"/>
<dbReference type="KEGG" id="cel:CELE_B0213.4"/>
<dbReference type="UCSC" id="B0213.4">
    <property type="organism name" value="c. elegans"/>
</dbReference>
<dbReference type="AGR" id="WB:WBGene00003767"/>
<dbReference type="CTD" id="178805"/>
<dbReference type="WormBase" id="B0213.4">
    <property type="protein sequence ID" value="CE16775"/>
    <property type="gene ID" value="WBGene00003767"/>
    <property type="gene designation" value="nlp-29"/>
</dbReference>
<dbReference type="eggNOG" id="ENOG502TJS1">
    <property type="taxonomic scope" value="Eukaryota"/>
</dbReference>
<dbReference type="HOGENOM" id="CLU_193227_0_0_1"/>
<dbReference type="InParanoid" id="O44664"/>
<dbReference type="OMA" id="EPRIIMI"/>
<dbReference type="PRO" id="PR:O44664"/>
<dbReference type="Proteomes" id="UP000001940">
    <property type="component" value="Chromosome V"/>
</dbReference>
<dbReference type="Bgee" id="WBGene00003767">
    <property type="expression patterns" value="Expressed in larva and 4 other cell types or tissues"/>
</dbReference>
<dbReference type="GO" id="GO:0005615">
    <property type="term" value="C:extracellular space"/>
    <property type="evidence" value="ECO:0000255"/>
    <property type="project" value="WormBase"/>
</dbReference>
<dbReference type="GO" id="GO:0071855">
    <property type="term" value="F:neuropeptide receptor binding"/>
    <property type="evidence" value="ECO:0000255"/>
    <property type="project" value="WormBase"/>
</dbReference>
<dbReference type="GO" id="GO:0042742">
    <property type="term" value="P:defense response to bacterium"/>
    <property type="evidence" value="ECO:0007669"/>
    <property type="project" value="UniProtKB-KW"/>
</dbReference>
<dbReference type="GO" id="GO:0050832">
    <property type="term" value="P:defense response to fungus"/>
    <property type="evidence" value="ECO:0007669"/>
    <property type="project" value="UniProtKB-KW"/>
</dbReference>
<dbReference type="GO" id="GO:0031640">
    <property type="term" value="P:killing of cells of another organism"/>
    <property type="evidence" value="ECO:0007669"/>
    <property type="project" value="UniProtKB-KW"/>
</dbReference>
<dbReference type="GO" id="GO:0007218">
    <property type="term" value="P:neuropeptide signaling pathway"/>
    <property type="evidence" value="ECO:0007669"/>
    <property type="project" value="UniProtKB-KW"/>
</dbReference>
<reference key="1">
    <citation type="journal article" date="1998" name="Science">
        <title>Genome sequence of the nematode C. elegans: a platform for investigating biology.</title>
        <authorList>
            <consortium name="The C. elegans sequencing consortium"/>
        </authorList>
    </citation>
    <scope>NUCLEOTIDE SEQUENCE [LARGE SCALE GENOMIC DNA]</scope>
    <source>
        <strain>Bristol N2</strain>
    </source>
</reference>
<reference key="2">
    <citation type="journal article" date="2001" name="Proc. Natl. Acad. Sci. U.S.A.">
        <title>Identification of neuropeptide-like protein gene families in Caenorhabditis elegans and other species.</title>
        <authorList>
            <person name="Nathoo A.N."/>
            <person name="Moeller R.A."/>
            <person name="Westlund B.A."/>
            <person name="Hart A.C."/>
        </authorList>
    </citation>
    <scope>IDENTIFICATION</scope>
    <scope>TISSUE SPECIFICITY</scope>
</reference>
<reference key="3">
    <citation type="journal article" date="2004" name="Nat. Immunol.">
        <title>TLR-independent control of innate immunity in Caenorhabditis elegans by the TIR domain adaptor protein TIR-1, an ortholog of human SARM.</title>
        <authorList>
            <person name="Couillault C."/>
            <person name="Pujol N."/>
            <person name="Reboul J."/>
            <person name="Sabatier L."/>
            <person name="Guichou J.-F."/>
            <person name="Kohara Y."/>
            <person name="Ewbank J.J."/>
        </authorList>
    </citation>
    <scope>FUNCTION</scope>
    <scope>TISSUE SPECIFICITY</scope>
    <scope>INDUCTION</scope>
</reference>
<reference key="4">
    <citation type="journal article" date="2008" name="Curr. Biol.">
        <title>Distinct innate immune responses to infection and wounding in the C. elegans epidermis.</title>
        <authorList>
            <person name="Pujol N."/>
            <person name="Cypowyj S."/>
            <person name="Ziegler K."/>
            <person name="Millet A."/>
            <person name="Astrain A."/>
            <person name="Goncharov A."/>
            <person name="Jin Y."/>
            <person name="Chisholm A.D."/>
            <person name="Ewbank J.J."/>
        </authorList>
    </citation>
    <scope>FUNCTION</scope>
    <scope>TISSUE SPECIFICITY</scope>
</reference>
<reference key="5">
    <citation type="journal article" date="2009" name="Cell Host Microbe">
        <title>Antifungal innate immunity in C. elegans: PKCdelta links G protein signaling and a conserved p38 MAPK cascade.</title>
        <authorList>
            <person name="Ziegler K."/>
            <person name="Kurz C.L."/>
            <person name="Cypowyj S."/>
            <person name="Couillault C."/>
            <person name="Pophillat M."/>
            <person name="Pujol N."/>
            <person name="Ewbank J.J."/>
        </authorList>
    </citation>
    <scope>FUNCTION</scope>
    <scope>TISSUE SPECIFICITY</scope>
    <scope>INDUCTION BY FUNGAL INFECTION; PHYSICAL INJURY AND OSMOTIC STRESS</scope>
</reference>
<reference key="6">
    <citation type="journal article" date="2021" name="Curr. Biol.">
        <title>Innate Immunity Promotes Sleep through Epidermal Antimicrobial Peptides.</title>
        <authorList>
            <person name="Sinner M.P."/>
            <person name="Masurat F."/>
            <person name="Ewbank J.J."/>
            <person name="Pujol N."/>
            <person name="Bringmann H."/>
        </authorList>
    </citation>
    <scope>FUNCTION</scope>
    <scope>DEVELOPMENTAL STAGE</scope>
    <scope>INDUCTION</scope>
</reference>
<protein>
    <recommendedName>
        <fullName>Neuropeptide-like protein 29</fullName>
    </recommendedName>
    <component>
        <recommendedName>
            <fullName>QWGYGGY-amide</fullName>
        </recommendedName>
    </component>
    <component>
        <recommendedName>
            <fullName>GYGGYGGY-amide</fullName>
        </recommendedName>
    </component>
    <component>
        <recommendedName>
            <fullName>GMYGGY-amide</fullName>
        </recommendedName>
    </component>
    <component>
        <recommendedName>
            <fullName>GMYGGW-amide</fullName>
        </recommendedName>
    </component>
</protein>
<organism>
    <name type="scientific">Caenorhabditis elegans</name>
    <dbReference type="NCBI Taxonomy" id="6239"/>
    <lineage>
        <taxon>Eukaryota</taxon>
        <taxon>Metazoa</taxon>
        <taxon>Ecdysozoa</taxon>
        <taxon>Nematoda</taxon>
        <taxon>Chromadorea</taxon>
        <taxon>Rhabditida</taxon>
        <taxon>Rhabditina</taxon>
        <taxon>Rhabditomorpha</taxon>
        <taxon>Rhabditoidea</taxon>
        <taxon>Rhabditidae</taxon>
        <taxon>Peloderinae</taxon>
        <taxon>Caenorhabditis</taxon>
    </lineage>
</organism>
<comment type="function">
    <text evidence="3 4 5 6">Antimicrobial peptides that have antibacterial activity against the Gram-negative bacteria S.marcescens. Has antifungal activity against D.coniospora (PubMed:15048112, PubMed:19380113). May play a role in response to physical injury and osmotic stress (PubMed:18394898, PubMed:19380113). Through the neuropeptide receptor nlp-29, induces sleep upon activation of the innate immune response to molting and injury to the adult epidermis (PubMed:33259791).</text>
</comment>
<comment type="subcellular location">
    <subcellularLocation>
        <location evidence="7">Secreted</location>
    </subcellularLocation>
</comment>
<comment type="tissue specificity">
    <text evidence="2 3 4 5">Weakly or not expressed in absence of infection. Upon infection by D.coniospora, it is expressed in hypoderm. Also expressed in perivulval cells when D.coniospora spores adhere to this region (PubMed:11717458, PubMed:15048112, PubMed:18394898, PubMed:19380113). Expressed in hypodermis upon physical injury (PubMed:18394898).</text>
</comment>
<comment type="developmental stage">
    <text evidence="6">In larva, expressed in an oscillating pattern with expression increasing during the lethargus phase, which occurs during molting between larval and adult stages.</text>
</comment>
<comment type="induction">
    <text evidence="3 5 6">Upon D.coniospora and S.marcescens infection (PubMed:15048112, PubMed:19380113). Upon physical injury and osmotic stress (PubMed:19380113). Transcriptionally regulated by the transcription factor sta-2 upon activation of the innate immune response to molting and injury to the adult epidermis (PubMed:33259791).</text>
</comment>
<comment type="similarity">
    <text evidence="7">Belongs to the YARP (YGGW-amide related peptide) family.</text>
</comment>
<gene>
    <name evidence="8" type="primary">nlp-29</name>
    <name evidence="8" type="ORF">B0213.4</name>
</gene>